<keyword id="KW-0067">ATP-binding</keyword>
<keyword id="KW-0963">Cytoplasm</keyword>
<keyword id="KW-0436">Ligase</keyword>
<keyword id="KW-0460">Magnesium</keyword>
<keyword id="KW-0479">Metal-binding</keyword>
<keyword id="KW-0547">Nucleotide-binding</keyword>
<keyword id="KW-0658">Purine biosynthesis</keyword>
<proteinExistence type="inferred from homology"/>
<reference key="1">
    <citation type="journal article" date="2007" name="PLoS Genet.">
        <title>Patterns and implications of gene gain and loss in the evolution of Prochlorococcus.</title>
        <authorList>
            <person name="Kettler G.C."/>
            <person name="Martiny A.C."/>
            <person name="Huang K."/>
            <person name="Zucker J."/>
            <person name="Coleman M.L."/>
            <person name="Rodrigue S."/>
            <person name="Chen F."/>
            <person name="Lapidus A."/>
            <person name="Ferriera S."/>
            <person name="Johnson J."/>
            <person name="Steglich C."/>
            <person name="Church G.M."/>
            <person name="Richardson P."/>
            <person name="Chisholm S.W."/>
        </authorList>
    </citation>
    <scope>NUCLEOTIDE SEQUENCE [LARGE SCALE GENOMIC DNA]</scope>
    <source>
        <strain>MIT 9515</strain>
    </source>
</reference>
<protein>
    <recommendedName>
        <fullName evidence="1">Phosphoribosylformylglycinamidine synthase subunit PurL</fullName>
        <shortName evidence="1">FGAM synthase</shortName>
        <ecNumber evidence="1">6.3.5.3</ecNumber>
    </recommendedName>
    <alternativeName>
        <fullName evidence="1">Formylglycinamide ribonucleotide amidotransferase subunit II</fullName>
        <shortName evidence="1">FGAR amidotransferase II</shortName>
        <shortName evidence="1">FGAR-AT II</shortName>
    </alternativeName>
    <alternativeName>
        <fullName evidence="1">Glutamine amidotransferase PurL</fullName>
    </alternativeName>
    <alternativeName>
        <fullName evidence="1">Phosphoribosylformylglycinamidine synthase subunit II</fullName>
    </alternativeName>
</protein>
<organism>
    <name type="scientific">Prochlorococcus marinus (strain MIT 9515)</name>
    <dbReference type="NCBI Taxonomy" id="167542"/>
    <lineage>
        <taxon>Bacteria</taxon>
        <taxon>Bacillati</taxon>
        <taxon>Cyanobacteriota</taxon>
        <taxon>Cyanophyceae</taxon>
        <taxon>Synechococcales</taxon>
        <taxon>Prochlorococcaceae</taxon>
        <taxon>Prochlorococcus</taxon>
    </lineage>
</organism>
<dbReference type="EC" id="6.3.5.3" evidence="1"/>
<dbReference type="EMBL" id="CP000552">
    <property type="protein sequence ID" value="ABM71211.1"/>
    <property type="molecule type" value="Genomic_DNA"/>
</dbReference>
<dbReference type="RefSeq" id="WP_011819328.1">
    <property type="nucleotide sequence ID" value="NC_008817.1"/>
</dbReference>
<dbReference type="SMR" id="A2BTV9"/>
<dbReference type="STRING" id="167542.P9515_00021"/>
<dbReference type="GeneID" id="60201843"/>
<dbReference type="KEGG" id="pmc:P9515_00021"/>
<dbReference type="eggNOG" id="COG0046">
    <property type="taxonomic scope" value="Bacteria"/>
</dbReference>
<dbReference type="HOGENOM" id="CLU_003100_0_1_3"/>
<dbReference type="OrthoDB" id="9804441at2"/>
<dbReference type="UniPathway" id="UPA00074">
    <property type="reaction ID" value="UER00128"/>
</dbReference>
<dbReference type="Proteomes" id="UP000001589">
    <property type="component" value="Chromosome"/>
</dbReference>
<dbReference type="GO" id="GO:0005737">
    <property type="term" value="C:cytoplasm"/>
    <property type="evidence" value="ECO:0007669"/>
    <property type="project" value="UniProtKB-SubCell"/>
</dbReference>
<dbReference type="GO" id="GO:0005524">
    <property type="term" value="F:ATP binding"/>
    <property type="evidence" value="ECO:0007669"/>
    <property type="project" value="UniProtKB-UniRule"/>
</dbReference>
<dbReference type="GO" id="GO:0000287">
    <property type="term" value="F:magnesium ion binding"/>
    <property type="evidence" value="ECO:0007669"/>
    <property type="project" value="UniProtKB-UniRule"/>
</dbReference>
<dbReference type="GO" id="GO:0004642">
    <property type="term" value="F:phosphoribosylformylglycinamidine synthase activity"/>
    <property type="evidence" value="ECO:0007669"/>
    <property type="project" value="UniProtKB-UniRule"/>
</dbReference>
<dbReference type="GO" id="GO:0006189">
    <property type="term" value="P:'de novo' IMP biosynthetic process"/>
    <property type="evidence" value="ECO:0007669"/>
    <property type="project" value="UniProtKB-UniRule"/>
</dbReference>
<dbReference type="CDD" id="cd02203">
    <property type="entry name" value="PurL_repeat1"/>
    <property type="match status" value="1"/>
</dbReference>
<dbReference type="CDD" id="cd02204">
    <property type="entry name" value="PurL_repeat2"/>
    <property type="match status" value="1"/>
</dbReference>
<dbReference type="FunFam" id="3.30.1330.10:FF:000004">
    <property type="entry name" value="Phosphoribosylformylglycinamidine synthase subunit PurL"/>
    <property type="match status" value="1"/>
</dbReference>
<dbReference type="Gene3D" id="3.90.650.10">
    <property type="entry name" value="PurM-like C-terminal domain"/>
    <property type="match status" value="2"/>
</dbReference>
<dbReference type="Gene3D" id="3.30.1330.10">
    <property type="entry name" value="PurM-like, N-terminal domain"/>
    <property type="match status" value="2"/>
</dbReference>
<dbReference type="HAMAP" id="MF_00420">
    <property type="entry name" value="PurL_2"/>
    <property type="match status" value="1"/>
</dbReference>
<dbReference type="InterPro" id="IPR010074">
    <property type="entry name" value="PRibForGlyAmidine_synth_PurL"/>
</dbReference>
<dbReference type="InterPro" id="IPR041609">
    <property type="entry name" value="PurL_linker"/>
</dbReference>
<dbReference type="InterPro" id="IPR010918">
    <property type="entry name" value="PurM-like_C_dom"/>
</dbReference>
<dbReference type="InterPro" id="IPR036676">
    <property type="entry name" value="PurM-like_C_sf"/>
</dbReference>
<dbReference type="InterPro" id="IPR016188">
    <property type="entry name" value="PurM-like_N"/>
</dbReference>
<dbReference type="InterPro" id="IPR036921">
    <property type="entry name" value="PurM-like_N_sf"/>
</dbReference>
<dbReference type="NCBIfam" id="TIGR01736">
    <property type="entry name" value="FGAM_synth_II"/>
    <property type="match status" value="1"/>
</dbReference>
<dbReference type="NCBIfam" id="NF002290">
    <property type="entry name" value="PRK01213.1"/>
    <property type="match status" value="1"/>
</dbReference>
<dbReference type="PANTHER" id="PTHR43555">
    <property type="entry name" value="PHOSPHORIBOSYLFORMYLGLYCINAMIDINE SYNTHASE SUBUNIT PURL"/>
    <property type="match status" value="1"/>
</dbReference>
<dbReference type="PANTHER" id="PTHR43555:SF1">
    <property type="entry name" value="PHOSPHORIBOSYLFORMYLGLYCINAMIDINE SYNTHASE SUBUNIT PURL"/>
    <property type="match status" value="1"/>
</dbReference>
<dbReference type="Pfam" id="PF00586">
    <property type="entry name" value="AIRS"/>
    <property type="match status" value="2"/>
</dbReference>
<dbReference type="Pfam" id="PF02769">
    <property type="entry name" value="AIRS_C"/>
    <property type="match status" value="2"/>
</dbReference>
<dbReference type="Pfam" id="PF18072">
    <property type="entry name" value="FGAR-AT_linker"/>
    <property type="match status" value="1"/>
</dbReference>
<dbReference type="PIRSF" id="PIRSF001587">
    <property type="entry name" value="FGAM_synthase_II"/>
    <property type="match status" value="1"/>
</dbReference>
<dbReference type="SUPFAM" id="SSF56042">
    <property type="entry name" value="PurM C-terminal domain-like"/>
    <property type="match status" value="2"/>
</dbReference>
<dbReference type="SUPFAM" id="SSF55326">
    <property type="entry name" value="PurM N-terminal domain-like"/>
    <property type="match status" value="2"/>
</dbReference>
<sequence length="779" mass="85108">MIDSLNNYNYDVNDSLKVENLTTEDYEEICKRLGRKPNRTELGMFGVMWSEHCCYRNSKPLLANFPTTGKNVLVGPGENAGVIDVGNDQKLVFKIESHNHPSAIEPFQGAATGVGGILRDIFTMGARPIAVLNSLRFGNLDKSSNISLLRGVVSGISHYGNCVGVPTVGGEIYFDDSYSGNPLVNVMALGLLETDEIVCSGAKEVGYPVLYVGNTTGKDGVGGASFASSELNTNSLDNRPAVQVGDPFIEKSLIEACLDAFKTGDVIAAQDMGAAGLTCSSAEMAANGGLGISINLDLVPARENDMTAYQYLLSESQERMLLVVKEEKLNILIEQFKKWGLFANVIGEVISKKEVIISQKNQIVAQIPTSALSDETPINIHKVIKEPPDYLQKKWKWSEDELPIITNNKILSFKDKKQYSLSEIILNLLSNPSIASKSWIYKQYDSQVQSNTVFKPGEADAALLRLRAQDERNKNNNFSGVAASVDCNSRWVLLDPYRGSIAAVAESARNVSCVGAEPLAITNNLNFSSPNTEIGYWQLSSACDGISKACIALETPVTGGNVSLYNESKNKNNQVTPIYPTPVIGMVGKIQNVDKAVSSGWKNINDQIWLIGSYRSESSIGGSSYLDYFHGLITGRPPKINLQDEKYCQTFLRDAISKNYISSSHDISDGGLAIALSECCILSSKGANIQLEEKNARKDNILFSEGGSRIIFSLNKMEETNFLNFVSINNKNFGSNIYVKKIGFVSEANLTINVQDEELCNLRVDELAEKFNNSISNSF</sequence>
<accession>A2BTV9</accession>
<gene>
    <name evidence="1" type="primary">purL</name>
    <name type="ordered locus">P9515_00021</name>
</gene>
<feature type="chain" id="PRO_1000050335" description="Phosphoribosylformylglycinamidine synthase subunit PurL">
    <location>
        <begin position="1"/>
        <end position="779"/>
    </location>
</feature>
<feature type="active site" evidence="1">
    <location>
        <position position="52"/>
    </location>
</feature>
<feature type="active site" description="Proton acceptor" evidence="1">
    <location>
        <position position="98"/>
    </location>
</feature>
<feature type="binding site" evidence="1">
    <location>
        <position position="55"/>
    </location>
    <ligand>
        <name>ATP</name>
        <dbReference type="ChEBI" id="CHEBI:30616"/>
    </ligand>
</feature>
<feature type="binding site" evidence="1">
    <location>
        <position position="94"/>
    </location>
    <ligand>
        <name>ATP</name>
        <dbReference type="ChEBI" id="CHEBI:30616"/>
    </ligand>
</feature>
<feature type="binding site" evidence="1">
    <location>
        <position position="96"/>
    </location>
    <ligand>
        <name>Mg(2+)</name>
        <dbReference type="ChEBI" id="CHEBI:18420"/>
        <label>1</label>
    </ligand>
</feature>
<feature type="binding site" evidence="1">
    <location>
        <begin position="97"/>
        <end position="100"/>
    </location>
    <ligand>
        <name>substrate</name>
    </ligand>
</feature>
<feature type="binding site" evidence="1">
    <location>
        <position position="119"/>
    </location>
    <ligand>
        <name>substrate</name>
    </ligand>
</feature>
<feature type="binding site" evidence="1">
    <location>
        <position position="120"/>
    </location>
    <ligand>
        <name>Mg(2+)</name>
        <dbReference type="ChEBI" id="CHEBI:18420"/>
        <label>2</label>
    </ligand>
</feature>
<feature type="binding site" evidence="1">
    <location>
        <position position="243"/>
    </location>
    <ligand>
        <name>substrate</name>
    </ligand>
</feature>
<feature type="binding site" evidence="1">
    <location>
        <position position="271"/>
    </location>
    <ligand>
        <name>Mg(2+)</name>
        <dbReference type="ChEBI" id="CHEBI:18420"/>
        <label>2</label>
    </ligand>
</feature>
<feature type="binding site" evidence="1">
    <location>
        <begin position="315"/>
        <end position="317"/>
    </location>
    <ligand>
        <name>substrate</name>
    </ligand>
</feature>
<feature type="binding site" evidence="1">
    <location>
        <position position="523"/>
    </location>
    <ligand>
        <name>ATP</name>
        <dbReference type="ChEBI" id="CHEBI:30616"/>
    </ligand>
</feature>
<feature type="binding site" evidence="1">
    <location>
        <position position="560"/>
    </location>
    <ligand>
        <name>ATP</name>
        <dbReference type="ChEBI" id="CHEBI:30616"/>
    </ligand>
</feature>
<feature type="binding site" evidence="1">
    <location>
        <position position="561"/>
    </location>
    <ligand>
        <name>Mg(2+)</name>
        <dbReference type="ChEBI" id="CHEBI:18420"/>
        <label>1</label>
    </ligand>
</feature>
<feature type="binding site" evidence="1">
    <location>
        <position position="563"/>
    </location>
    <ligand>
        <name>substrate</name>
    </ligand>
</feature>
<evidence type="ECO:0000255" key="1">
    <source>
        <dbReference type="HAMAP-Rule" id="MF_00420"/>
    </source>
</evidence>
<name>PURL_PROM5</name>
<comment type="function">
    <text evidence="1">Part of the phosphoribosylformylglycinamidine synthase complex involved in the purines biosynthetic pathway. Catalyzes the ATP-dependent conversion of formylglycinamide ribonucleotide (FGAR) and glutamine to yield formylglycinamidine ribonucleotide (FGAM) and glutamate. The FGAM synthase complex is composed of three subunits. PurQ produces an ammonia molecule by converting glutamine to glutamate. PurL transfers the ammonia molecule to FGAR to form FGAM in an ATP-dependent manner. PurS interacts with PurQ and PurL and is thought to assist in the transfer of the ammonia molecule from PurQ to PurL.</text>
</comment>
<comment type="catalytic activity">
    <reaction evidence="1">
        <text>N(2)-formyl-N(1)-(5-phospho-beta-D-ribosyl)glycinamide + L-glutamine + ATP + H2O = 2-formamido-N(1)-(5-O-phospho-beta-D-ribosyl)acetamidine + L-glutamate + ADP + phosphate + H(+)</text>
        <dbReference type="Rhea" id="RHEA:17129"/>
        <dbReference type="ChEBI" id="CHEBI:15377"/>
        <dbReference type="ChEBI" id="CHEBI:15378"/>
        <dbReference type="ChEBI" id="CHEBI:29985"/>
        <dbReference type="ChEBI" id="CHEBI:30616"/>
        <dbReference type="ChEBI" id="CHEBI:43474"/>
        <dbReference type="ChEBI" id="CHEBI:58359"/>
        <dbReference type="ChEBI" id="CHEBI:147286"/>
        <dbReference type="ChEBI" id="CHEBI:147287"/>
        <dbReference type="ChEBI" id="CHEBI:456216"/>
        <dbReference type="EC" id="6.3.5.3"/>
    </reaction>
</comment>
<comment type="pathway">
    <text evidence="1">Purine metabolism; IMP biosynthesis via de novo pathway; 5-amino-1-(5-phospho-D-ribosyl)imidazole from N(2)-formyl-N(1)-(5-phospho-D-ribosyl)glycinamide: step 1/2.</text>
</comment>
<comment type="subunit">
    <text evidence="1">Monomer. Part of the FGAM synthase complex composed of 1 PurL, 1 PurQ and 2 PurS subunits.</text>
</comment>
<comment type="subcellular location">
    <subcellularLocation>
        <location evidence="1">Cytoplasm</location>
    </subcellularLocation>
</comment>
<comment type="similarity">
    <text evidence="1">Belongs to the FGAMS family.</text>
</comment>